<sequence length="401" mass="44423">MTTQFSVADIELSLSRYPANQVSNLQAWDAADEHLIKHLKEIEQKADNTAVINDSFGALCAALTAQAADWPIWVETDAKTSQLGTLQNFNANRLSDSNLTWLNSRELPPQGINLVLMKLPKNLNYFIHQLQRLSQSLAPNTPVYIGAKAKSINKALLETIAKHLGPASASLAWKKTRVITCIADGKPRALPSEVSWAVKEFNLSISNLSNVFAANKLDIGARIMLDNLPEGHFDTIVDLGCGNGILGLRAKQCYPNAEVHFVDDSEMAITSARQNWQANKLDNPEQAKPQGHFHWDDCLTHLGDEVKPDLVLCNPPFHQGEAITDHIAWQMFLDAFHQLRPGGMLQVVGNRHLGYHVKLKRIFKNCETAASNGKFVILRAIKSAKEPVKPAKDVNEPDHQS</sequence>
<protein>
    <recommendedName>
        <fullName evidence="1">Ribosomal RNA large subunit methyltransferase G</fullName>
        <ecNumber evidence="1">2.1.1.174</ecNumber>
    </recommendedName>
    <alternativeName>
        <fullName evidence="1">23S rRNA m2G1835 methyltransferase</fullName>
    </alternativeName>
    <alternativeName>
        <fullName evidence="1">rRNA (guanine-N(2)-)-methyltransferase RlmG</fullName>
    </alternativeName>
</protein>
<name>RLMG_SHELP</name>
<organism>
    <name type="scientific">Shewanella loihica (strain ATCC BAA-1088 / PV-4)</name>
    <dbReference type="NCBI Taxonomy" id="323850"/>
    <lineage>
        <taxon>Bacteria</taxon>
        <taxon>Pseudomonadati</taxon>
        <taxon>Pseudomonadota</taxon>
        <taxon>Gammaproteobacteria</taxon>
        <taxon>Alteromonadales</taxon>
        <taxon>Shewanellaceae</taxon>
        <taxon>Shewanella</taxon>
    </lineage>
</organism>
<reference key="1">
    <citation type="submission" date="2007-03" db="EMBL/GenBank/DDBJ databases">
        <title>Complete sequence of Shewanella loihica PV-4.</title>
        <authorList>
            <consortium name="US DOE Joint Genome Institute"/>
            <person name="Copeland A."/>
            <person name="Lucas S."/>
            <person name="Lapidus A."/>
            <person name="Barry K."/>
            <person name="Detter J.C."/>
            <person name="Glavina del Rio T."/>
            <person name="Hammon N."/>
            <person name="Israni S."/>
            <person name="Dalin E."/>
            <person name="Tice H."/>
            <person name="Pitluck S."/>
            <person name="Chain P."/>
            <person name="Malfatti S."/>
            <person name="Shin M."/>
            <person name="Vergez L."/>
            <person name="Schmutz J."/>
            <person name="Larimer F."/>
            <person name="Land M."/>
            <person name="Hauser L."/>
            <person name="Kyrpides N."/>
            <person name="Mikhailova N."/>
            <person name="Romine M.F."/>
            <person name="Serres G."/>
            <person name="Fredrickson J."/>
            <person name="Tiedje J."/>
            <person name="Richardson P."/>
        </authorList>
    </citation>
    <scope>NUCLEOTIDE SEQUENCE [LARGE SCALE GENOMIC DNA]</scope>
    <source>
        <strain>ATCC BAA-1088 / PV-4</strain>
    </source>
</reference>
<comment type="function">
    <text evidence="1">Specifically methylates the guanine in position 1835 (m2G1835) of 23S rRNA.</text>
</comment>
<comment type="catalytic activity">
    <reaction evidence="1">
        <text>guanosine(1835) in 23S rRNA + S-adenosyl-L-methionine = N(2)-methylguanosine(1835) in 23S rRNA + S-adenosyl-L-homocysteine + H(+)</text>
        <dbReference type="Rhea" id="RHEA:42744"/>
        <dbReference type="Rhea" id="RHEA-COMP:10217"/>
        <dbReference type="Rhea" id="RHEA-COMP:10218"/>
        <dbReference type="ChEBI" id="CHEBI:15378"/>
        <dbReference type="ChEBI" id="CHEBI:57856"/>
        <dbReference type="ChEBI" id="CHEBI:59789"/>
        <dbReference type="ChEBI" id="CHEBI:74269"/>
        <dbReference type="ChEBI" id="CHEBI:74481"/>
        <dbReference type="EC" id="2.1.1.174"/>
    </reaction>
</comment>
<comment type="subcellular location">
    <subcellularLocation>
        <location evidence="1">Cytoplasm</location>
    </subcellularLocation>
</comment>
<comment type="similarity">
    <text evidence="1">Belongs to the methyltransferase superfamily. RlmG family.</text>
</comment>
<keyword id="KW-0963">Cytoplasm</keyword>
<keyword id="KW-0489">Methyltransferase</keyword>
<keyword id="KW-1185">Reference proteome</keyword>
<keyword id="KW-0698">rRNA processing</keyword>
<keyword id="KW-0949">S-adenosyl-L-methionine</keyword>
<keyword id="KW-0808">Transferase</keyword>
<dbReference type="EC" id="2.1.1.174" evidence="1"/>
<dbReference type="EMBL" id="CP000606">
    <property type="protein sequence ID" value="ABO24752.1"/>
    <property type="molecule type" value="Genomic_DNA"/>
</dbReference>
<dbReference type="SMR" id="A3QH04"/>
<dbReference type="STRING" id="323850.Shew_2886"/>
<dbReference type="KEGG" id="slo:Shew_2886"/>
<dbReference type="eggNOG" id="COG2813">
    <property type="taxonomic scope" value="Bacteria"/>
</dbReference>
<dbReference type="HOGENOM" id="CLU_040288_4_0_6"/>
<dbReference type="OrthoDB" id="29650at2"/>
<dbReference type="Proteomes" id="UP000001558">
    <property type="component" value="Chromosome"/>
</dbReference>
<dbReference type="GO" id="GO:0005737">
    <property type="term" value="C:cytoplasm"/>
    <property type="evidence" value="ECO:0007669"/>
    <property type="project" value="UniProtKB-SubCell"/>
</dbReference>
<dbReference type="GO" id="GO:0052916">
    <property type="term" value="F:23S rRNA (guanine(1835)-N(2))-methyltransferase activity"/>
    <property type="evidence" value="ECO:0007669"/>
    <property type="project" value="UniProtKB-EC"/>
</dbReference>
<dbReference type="GO" id="GO:0003676">
    <property type="term" value="F:nucleic acid binding"/>
    <property type="evidence" value="ECO:0007669"/>
    <property type="project" value="InterPro"/>
</dbReference>
<dbReference type="CDD" id="cd02440">
    <property type="entry name" value="AdoMet_MTases"/>
    <property type="match status" value="1"/>
</dbReference>
<dbReference type="Gene3D" id="3.40.50.150">
    <property type="entry name" value="Vaccinia Virus protein VP39"/>
    <property type="match status" value="2"/>
</dbReference>
<dbReference type="HAMAP" id="MF_01859">
    <property type="entry name" value="23SrRNA_methyltr_G"/>
    <property type="match status" value="1"/>
</dbReference>
<dbReference type="InterPro" id="IPR002052">
    <property type="entry name" value="DNA_methylase_N6_adenine_CS"/>
</dbReference>
<dbReference type="InterPro" id="IPR017237">
    <property type="entry name" value="rRNA_m2G-MeTrfase_RlmG"/>
</dbReference>
<dbReference type="InterPro" id="IPR046977">
    <property type="entry name" value="RsmC/RlmG"/>
</dbReference>
<dbReference type="InterPro" id="IPR029063">
    <property type="entry name" value="SAM-dependent_MTases_sf"/>
</dbReference>
<dbReference type="InterPro" id="IPR007848">
    <property type="entry name" value="Small_mtfrase_dom"/>
</dbReference>
<dbReference type="PANTHER" id="PTHR47816:SF5">
    <property type="entry name" value="RIBOSOMAL RNA LARGE SUBUNIT METHYLTRANSFERASE G"/>
    <property type="match status" value="1"/>
</dbReference>
<dbReference type="PANTHER" id="PTHR47816">
    <property type="entry name" value="RIBOSOMAL RNA SMALL SUBUNIT METHYLTRANSFERASE C"/>
    <property type="match status" value="1"/>
</dbReference>
<dbReference type="Pfam" id="PF05175">
    <property type="entry name" value="MTS"/>
    <property type="match status" value="1"/>
</dbReference>
<dbReference type="PIRSF" id="PIRSF037565">
    <property type="entry name" value="RRNA_m2G_Mtase_RsmD_prd"/>
    <property type="match status" value="1"/>
</dbReference>
<dbReference type="SUPFAM" id="SSF53335">
    <property type="entry name" value="S-adenosyl-L-methionine-dependent methyltransferases"/>
    <property type="match status" value="1"/>
</dbReference>
<gene>
    <name evidence="1" type="primary">rlmG</name>
    <name type="ordered locus">Shew_2886</name>
</gene>
<accession>A3QH04</accession>
<evidence type="ECO:0000255" key="1">
    <source>
        <dbReference type="HAMAP-Rule" id="MF_01859"/>
    </source>
</evidence>
<proteinExistence type="inferred from homology"/>
<feature type="chain" id="PRO_0000366511" description="Ribosomal RNA large subunit methyltransferase G">
    <location>
        <begin position="1"/>
        <end position="401"/>
    </location>
</feature>